<proteinExistence type="inferred from homology"/>
<evidence type="ECO:0000255" key="1">
    <source>
        <dbReference type="HAMAP-Rule" id="MF_01562"/>
    </source>
</evidence>
<keyword id="KW-1003">Cell membrane</keyword>
<keyword id="KW-0472">Membrane</keyword>
<keyword id="KW-0812">Transmembrane</keyword>
<keyword id="KW-1133">Transmembrane helix</keyword>
<reference key="1">
    <citation type="journal article" date="2008" name="J. Bacteriol.">
        <title>Genome sequence of Staphylococcus aureus strain Newman and comparative analysis of staphylococcal genomes: polymorphism and evolution of two major pathogenicity islands.</title>
        <authorList>
            <person name="Baba T."/>
            <person name="Bae T."/>
            <person name="Schneewind O."/>
            <person name="Takeuchi F."/>
            <person name="Hiramatsu K."/>
        </authorList>
    </citation>
    <scope>NUCLEOTIDE SEQUENCE [LARGE SCALE GENOMIC DNA]</scope>
    <source>
        <strain>Newman</strain>
    </source>
</reference>
<dbReference type="EMBL" id="AP009351">
    <property type="protein sequence ID" value="BAF67748.1"/>
    <property type="molecule type" value="Genomic_DNA"/>
</dbReference>
<dbReference type="RefSeq" id="WP_000492114.1">
    <property type="nucleotide sequence ID" value="NZ_JBBIAE010000001.1"/>
</dbReference>
<dbReference type="SMR" id="A6QHB6"/>
<dbReference type="GeneID" id="98345944"/>
<dbReference type="KEGG" id="sae:NWMN_1476"/>
<dbReference type="HOGENOM" id="CLU_836378_0_0_9"/>
<dbReference type="Proteomes" id="UP000006386">
    <property type="component" value="Chromosome"/>
</dbReference>
<dbReference type="GO" id="GO:0045121">
    <property type="term" value="C:membrane raft"/>
    <property type="evidence" value="ECO:0007669"/>
    <property type="project" value="UniProtKB-SubCell"/>
</dbReference>
<dbReference type="GO" id="GO:0005886">
    <property type="term" value="C:plasma membrane"/>
    <property type="evidence" value="ECO:0007669"/>
    <property type="project" value="UniProtKB-SubCell"/>
</dbReference>
<dbReference type="HAMAP" id="MF_01562">
    <property type="entry name" value="FloA"/>
    <property type="match status" value="1"/>
</dbReference>
<dbReference type="InterPro" id="IPR022853">
    <property type="entry name" value="FloA"/>
</dbReference>
<dbReference type="NCBIfam" id="NF010186">
    <property type="entry name" value="PRK13665.1"/>
    <property type="match status" value="1"/>
</dbReference>
<dbReference type="Pfam" id="PF12127">
    <property type="entry name" value="FloA"/>
    <property type="match status" value="1"/>
</dbReference>
<name>FLOA_STAAE</name>
<gene>
    <name evidence="1" type="primary">floA</name>
    <name type="ordered locus">NWMN_1476</name>
</gene>
<accession>A6QHB6</accession>
<organism>
    <name type="scientific">Staphylococcus aureus (strain Newman)</name>
    <dbReference type="NCBI Taxonomy" id="426430"/>
    <lineage>
        <taxon>Bacteria</taxon>
        <taxon>Bacillati</taxon>
        <taxon>Bacillota</taxon>
        <taxon>Bacilli</taxon>
        <taxon>Bacillales</taxon>
        <taxon>Staphylococcaceae</taxon>
        <taxon>Staphylococcus</taxon>
    </lineage>
</organism>
<protein>
    <recommendedName>
        <fullName evidence="1">Flotillin-like protein FloA</fullName>
    </recommendedName>
</protein>
<feature type="chain" id="PRO_1000073584" description="Flotillin-like protein FloA">
    <location>
        <begin position="1"/>
        <end position="329"/>
    </location>
</feature>
<feature type="transmembrane region" description="Helical" evidence="1">
    <location>
        <begin position="6"/>
        <end position="26"/>
    </location>
</feature>
<feature type="transmembrane region" description="Helical" evidence="1">
    <location>
        <begin position="27"/>
        <end position="47"/>
    </location>
</feature>
<sequence>MFSLSFIVIAVIIVVALLILFSFVPIGLWISALAAGVHVGIGTLVGMRLRRVSPRKVIAPLIKAHKAGLALTTNQLESHYLAGGNVDRVVDANIAAQRADIDLPFERAAAIDLAGRDVLEAVQMSVNPKVIETPFIAGVAMNGIEVKAKARITVRANIARLVGGAGEETIIARVGEGIVSTIGSSKHHTEVLENPDNISKTVLSKGLDSGTAFEILSIDIADVDISKNIGADLQTEQALADKNIAQAKAEERRAMAVATEQEMKARVQEMHAKVVEAESEVPLAMAEALRSGNISVKDYYNLKNIEADTGMRNAINKRTDQSDDESPEH</sequence>
<comment type="function">
    <text evidence="1">Found in functional membrane microdomains (FMM) that may be equivalent to eukaryotic membrane rafts. FMMs are highly dynamic and increase in number as cells age. Flotillins are thought to be important factors in membrane fluidity.</text>
</comment>
<comment type="subunit">
    <text evidence="1">Homooligomerizes.</text>
</comment>
<comment type="subcellular location">
    <subcellularLocation>
        <location evidence="1">Cell membrane</location>
        <topology evidence="1">Multi-pass membrane protein</topology>
    </subcellularLocation>
    <subcellularLocation>
        <location evidence="1">Membrane raft</location>
        <topology evidence="1">Multi-pass membrane protein</topology>
    </subcellularLocation>
</comment>
<comment type="similarity">
    <text evidence="1">Belongs to the flotillin-like FloA family.</text>
</comment>